<proteinExistence type="inferred from homology"/>
<organism>
    <name type="scientific">Neurospora crassa (strain ATCC 24698 / 74-OR23-1A / CBS 708.71 / DSM 1257 / FGSC 987)</name>
    <dbReference type="NCBI Taxonomy" id="367110"/>
    <lineage>
        <taxon>Eukaryota</taxon>
        <taxon>Fungi</taxon>
        <taxon>Dikarya</taxon>
        <taxon>Ascomycota</taxon>
        <taxon>Pezizomycotina</taxon>
        <taxon>Sordariomycetes</taxon>
        <taxon>Sordariomycetidae</taxon>
        <taxon>Sordariales</taxon>
        <taxon>Sordariaceae</taxon>
        <taxon>Neurospora</taxon>
    </lineage>
</organism>
<name>AF9_NEUCR</name>
<feature type="chain" id="PRO_0000215930" description="Protein AF-9 homolog">
    <location>
        <begin position="1"/>
        <end position="309"/>
    </location>
</feature>
<feature type="domain" description="YEATS" evidence="3">
    <location>
        <begin position="8"/>
        <end position="167"/>
    </location>
</feature>
<feature type="region of interest" description="Disordered" evidence="4">
    <location>
        <begin position="175"/>
        <end position="241"/>
    </location>
</feature>
<feature type="coiled-coil region" evidence="2">
    <location>
        <begin position="265"/>
        <end position="309"/>
    </location>
</feature>
<feature type="compositionally biased region" description="Low complexity" evidence="4">
    <location>
        <begin position="187"/>
        <end position="203"/>
    </location>
</feature>
<feature type="compositionally biased region" description="Basic residues" evidence="4">
    <location>
        <begin position="204"/>
        <end position="214"/>
    </location>
</feature>
<feature type="compositionally biased region" description="Basic and acidic residues" evidence="4">
    <location>
        <begin position="222"/>
        <end position="234"/>
    </location>
</feature>
<comment type="function">
    <text evidence="1">Component of the SWR1 complex which mediates the ATP-dependent exchange of histone H2A for the H2A variant H2A.Z leading to transcriptional regulation of selected genes by chromatin remodeling. Component of the NuA4 histone acetyltransferase complex which is involved in transcriptional activation of selected genes principally by acetylation of nucleosomal histones H4 and H2A. The NuA4 complex is also involved in DNA repair. Yaf9 may also be required for viability in conditions in which the structural integrity of the spindle is compromised (By similarity).</text>
</comment>
<comment type="subunit">
    <text evidence="1">Component of the SWR1 chromatin-remodeling complex and of the NuA4 histone acetyltransferase complex.</text>
</comment>
<comment type="subcellular location">
    <subcellularLocation>
        <location evidence="1">Cytoplasm</location>
    </subcellularLocation>
    <subcellularLocation>
        <location evidence="3">Nucleus</location>
    </subcellularLocation>
</comment>
<comment type="domain">
    <text evidence="1">The coiled-coil domain is required for assembly into the NuA4 complex.</text>
</comment>
<comment type="similarity">
    <text evidence="5">Belongs to the YAF9 family.</text>
</comment>
<accession>Q7RZK7</accession>
<dbReference type="EMBL" id="CM002238">
    <property type="protein sequence ID" value="EAA28594.1"/>
    <property type="molecule type" value="Genomic_DNA"/>
</dbReference>
<dbReference type="RefSeq" id="XP_957830.1">
    <property type="nucleotide sequence ID" value="XM_952737.3"/>
</dbReference>
<dbReference type="SMR" id="Q7RZK7"/>
<dbReference type="FunCoup" id="Q7RZK7">
    <property type="interactions" value="663"/>
</dbReference>
<dbReference type="STRING" id="367110.Q7RZK7"/>
<dbReference type="PaxDb" id="5141-EFNCRP00000000220"/>
<dbReference type="EnsemblFungi" id="EAA28594">
    <property type="protein sequence ID" value="EAA28594"/>
    <property type="gene ID" value="NCU00359"/>
</dbReference>
<dbReference type="GeneID" id="3873857"/>
<dbReference type="KEGG" id="ncr:NCU00359"/>
<dbReference type="VEuPathDB" id="FungiDB:NCU00359"/>
<dbReference type="HOGENOM" id="CLU_051385_2_0_1"/>
<dbReference type="InParanoid" id="Q7RZK7"/>
<dbReference type="OrthoDB" id="16041at2759"/>
<dbReference type="Proteomes" id="UP000001805">
    <property type="component" value="Chromosome 3, Linkage Group III"/>
</dbReference>
<dbReference type="GO" id="GO:0005737">
    <property type="term" value="C:cytoplasm"/>
    <property type="evidence" value="ECO:0007669"/>
    <property type="project" value="UniProtKB-SubCell"/>
</dbReference>
<dbReference type="GO" id="GO:0035267">
    <property type="term" value="C:NuA4 histone acetyltransferase complex"/>
    <property type="evidence" value="ECO:0000318"/>
    <property type="project" value="GO_Central"/>
</dbReference>
<dbReference type="GO" id="GO:0005634">
    <property type="term" value="C:nucleus"/>
    <property type="evidence" value="ECO:0000318"/>
    <property type="project" value="GO_Central"/>
</dbReference>
<dbReference type="GO" id="GO:0000812">
    <property type="term" value="C:Swr1 complex"/>
    <property type="evidence" value="ECO:0000318"/>
    <property type="project" value="GO_Central"/>
</dbReference>
<dbReference type="GO" id="GO:0042393">
    <property type="term" value="F:histone binding"/>
    <property type="evidence" value="ECO:0000318"/>
    <property type="project" value="GO_Central"/>
</dbReference>
<dbReference type="GO" id="GO:0006338">
    <property type="term" value="P:chromatin remodeling"/>
    <property type="evidence" value="ECO:0000318"/>
    <property type="project" value="GO_Central"/>
</dbReference>
<dbReference type="GO" id="GO:0006281">
    <property type="term" value="P:DNA repair"/>
    <property type="evidence" value="ECO:0007669"/>
    <property type="project" value="UniProtKB-KW"/>
</dbReference>
<dbReference type="GO" id="GO:0006357">
    <property type="term" value="P:regulation of transcription by RNA polymerase II"/>
    <property type="evidence" value="ECO:0000318"/>
    <property type="project" value="GO_Central"/>
</dbReference>
<dbReference type="CDD" id="cd16908">
    <property type="entry name" value="YEATS_Yaf9_like"/>
    <property type="match status" value="1"/>
</dbReference>
<dbReference type="Gene3D" id="2.60.40.1970">
    <property type="entry name" value="YEATS domain"/>
    <property type="match status" value="1"/>
</dbReference>
<dbReference type="InterPro" id="IPR038704">
    <property type="entry name" value="YEAST_sf"/>
</dbReference>
<dbReference type="InterPro" id="IPR005033">
    <property type="entry name" value="YEATS"/>
</dbReference>
<dbReference type="InterPro" id="IPR055129">
    <property type="entry name" value="YEATS_dom"/>
</dbReference>
<dbReference type="PANTHER" id="PTHR47573">
    <property type="entry name" value="PROTEIN AF-9 HOMOLOG"/>
    <property type="match status" value="1"/>
</dbReference>
<dbReference type="PANTHER" id="PTHR47573:SF1">
    <property type="entry name" value="PROTEIN AF-9 HOMOLOG"/>
    <property type="match status" value="1"/>
</dbReference>
<dbReference type="Pfam" id="PF03366">
    <property type="entry name" value="YEATS"/>
    <property type="match status" value="1"/>
</dbReference>
<dbReference type="PROSITE" id="PS51037">
    <property type="entry name" value="YEATS"/>
    <property type="match status" value="1"/>
</dbReference>
<gene>
    <name type="primary">yaf9</name>
    <name type="ORF">NCU00359</name>
</gene>
<keyword id="KW-0010">Activator</keyword>
<keyword id="KW-0156">Chromatin regulator</keyword>
<keyword id="KW-0175">Coiled coil</keyword>
<keyword id="KW-0963">Cytoplasm</keyword>
<keyword id="KW-0227">DNA damage</keyword>
<keyword id="KW-0234">DNA repair</keyword>
<keyword id="KW-0539">Nucleus</keyword>
<keyword id="KW-1185">Reference proteome</keyword>
<keyword id="KW-0804">Transcription</keyword>
<keyword id="KW-0805">Transcription regulation</keyword>
<protein>
    <recommendedName>
        <fullName>Protein AF-9 homolog</fullName>
    </recommendedName>
</protein>
<sequence length="309" mass="34667">MAPPTGKRVKGVQIFRPFVYGTTARPFDEKTNPKPPGIPDDHTHSWTVFIKGIDDVDITYWLRRVQFKLHESIPNHVRMVEGVKGQPFQIHETGWGEFEITMKLYYVPESSEKPQTLYHHLRLHPFGRTEEEKEAMRLNGGEVISWVYEEQIFNEPYEPFYDILISGALPPSASTLKDGGGGGGSGAATPTSANTPGASSSKGGNKKGHERSHSRASVSTNKDGKNNNESKEEPFVIQKSEGGVLERSAMIPLVNRPGQPFSRETEQLEIQKLKEAKLKVDEMKKQMMEELEKKQKRLEALRAESAKAP</sequence>
<reference key="1">
    <citation type="journal article" date="2003" name="Nature">
        <title>The genome sequence of the filamentous fungus Neurospora crassa.</title>
        <authorList>
            <person name="Galagan J.E."/>
            <person name="Calvo S.E."/>
            <person name="Borkovich K.A."/>
            <person name="Selker E.U."/>
            <person name="Read N.D."/>
            <person name="Jaffe D.B."/>
            <person name="FitzHugh W."/>
            <person name="Ma L.-J."/>
            <person name="Smirnov S."/>
            <person name="Purcell S."/>
            <person name="Rehman B."/>
            <person name="Elkins T."/>
            <person name="Engels R."/>
            <person name="Wang S."/>
            <person name="Nielsen C.B."/>
            <person name="Butler J."/>
            <person name="Endrizzi M."/>
            <person name="Qui D."/>
            <person name="Ianakiev P."/>
            <person name="Bell-Pedersen D."/>
            <person name="Nelson M.A."/>
            <person name="Werner-Washburne M."/>
            <person name="Selitrennikoff C.P."/>
            <person name="Kinsey J.A."/>
            <person name="Braun E.L."/>
            <person name="Zelter A."/>
            <person name="Schulte U."/>
            <person name="Kothe G.O."/>
            <person name="Jedd G."/>
            <person name="Mewes H.-W."/>
            <person name="Staben C."/>
            <person name="Marcotte E."/>
            <person name="Greenberg D."/>
            <person name="Roy A."/>
            <person name="Foley K."/>
            <person name="Naylor J."/>
            <person name="Stange-Thomann N."/>
            <person name="Barrett R."/>
            <person name="Gnerre S."/>
            <person name="Kamal M."/>
            <person name="Kamvysselis M."/>
            <person name="Mauceli E.W."/>
            <person name="Bielke C."/>
            <person name="Rudd S."/>
            <person name="Frishman D."/>
            <person name="Krystofova S."/>
            <person name="Rasmussen C."/>
            <person name="Metzenberg R.L."/>
            <person name="Perkins D.D."/>
            <person name="Kroken S."/>
            <person name="Cogoni C."/>
            <person name="Macino G."/>
            <person name="Catcheside D.E.A."/>
            <person name="Li W."/>
            <person name="Pratt R.J."/>
            <person name="Osmani S.A."/>
            <person name="DeSouza C.P.C."/>
            <person name="Glass N.L."/>
            <person name="Orbach M.J."/>
            <person name="Berglund J.A."/>
            <person name="Voelker R."/>
            <person name="Yarden O."/>
            <person name="Plamann M."/>
            <person name="Seiler S."/>
            <person name="Dunlap J.C."/>
            <person name="Radford A."/>
            <person name="Aramayo R."/>
            <person name="Natvig D.O."/>
            <person name="Alex L.A."/>
            <person name="Mannhaupt G."/>
            <person name="Ebbole D.J."/>
            <person name="Freitag M."/>
            <person name="Paulsen I."/>
            <person name="Sachs M.S."/>
            <person name="Lander E.S."/>
            <person name="Nusbaum C."/>
            <person name="Birren B.W."/>
        </authorList>
    </citation>
    <scope>NUCLEOTIDE SEQUENCE [LARGE SCALE GENOMIC DNA]</scope>
    <source>
        <strain>ATCC 24698 / 74-OR23-1A / CBS 708.71 / DSM 1257 / FGSC 987</strain>
    </source>
</reference>
<evidence type="ECO:0000250" key="1"/>
<evidence type="ECO:0000255" key="2"/>
<evidence type="ECO:0000255" key="3">
    <source>
        <dbReference type="PROSITE-ProRule" id="PRU00376"/>
    </source>
</evidence>
<evidence type="ECO:0000256" key="4">
    <source>
        <dbReference type="SAM" id="MobiDB-lite"/>
    </source>
</evidence>
<evidence type="ECO:0000305" key="5"/>